<reference key="1">
    <citation type="journal article" date="1999" name="Peptides">
        <title>Conopeptides from Conus striatus and Conus textile by cDNA cloning.</title>
        <authorList>
            <person name="Lu B.-S."/>
            <person name="Yu F."/>
            <person name="Zhao D."/>
            <person name="Huang P.-T."/>
            <person name="Huang C.-F."/>
        </authorList>
    </citation>
    <scope>NUCLEOTIDE SEQUENCE [MRNA]</scope>
    <source>
        <tissue>Venom duct</tissue>
    </source>
</reference>
<reference key="2">
    <citation type="journal article" date="2004" name="J. Biol. Chem.">
        <title>The A-superfamily of conotoxins: structural and functional divergence.</title>
        <authorList>
            <person name="Santos A.D."/>
            <person name="McIntosh J.M."/>
            <person name="Hillyard D.R."/>
            <person name="Cruz L.J."/>
            <person name="Olivera B.M."/>
        </authorList>
    </citation>
    <scope>NUCLEOTIDE SEQUENCE [MRNA]</scope>
    <source>
        <tissue>Venom duct</tissue>
    </source>
</reference>
<reference key="3">
    <citation type="journal article" date="1988" name="Biochemistry">
        <title>Phylogenetic specificity of cholinergic ligands: alpha-conotoxin SI.</title>
        <authorList>
            <person name="Zafaralla G.C."/>
            <person name="Ramilo C."/>
            <person name="Gray W.R."/>
            <person name="Karlstroem R."/>
            <person name="Olivera B.M."/>
            <person name="Cruz L.J."/>
        </authorList>
    </citation>
    <scope>PROTEIN SEQUENCE OF 50-62</scope>
    <scope>FUNCTION</scope>
    <scope>SUBCELLULAR LOCATION</scope>
    <scope>BIOASSAY</scope>
    <source>
        <tissue>Venom</tissue>
    </source>
</reference>
<reference key="4">
    <citation type="journal article" date="1997" name="Biochemistry">
        <title>Determinants involved in the affinity of alpha-conotoxins GI and SI for the muscle subtype of nicotinic acetylcholine receptors.</title>
        <authorList>
            <person name="Groebe D.R."/>
            <person name="Gray W.R."/>
            <person name="Abramson S.N."/>
        </authorList>
    </citation>
    <scope>FUNCTION</scope>
</reference>
<reference key="5">
    <citation type="journal article" date="2022" name="ACS Chem. Neurosci.">
        <title>Cysteine-rich alpha-conotoxin SII displays novel interactions at the muscle nicotinic acetylcholine receptor.</title>
        <authorList>
            <person name="Wilhelm P."/>
            <person name="Luna-Ramirez K."/>
            <person name="Chin Y.K."/>
            <person name="Dekan Z."/>
            <person name="Abraham N."/>
            <person name="Tae H.S."/>
            <person name="Chow C.Y."/>
            <person name="Eagles D.A."/>
            <person name="King G.F."/>
            <person name="Lewis R.J."/>
            <person name="Adams D.J."/>
            <person name="Alewood P.F."/>
        </authorList>
    </citation>
    <scope>FUNCTION</scope>
</reference>
<reference key="6">
    <citation type="journal article" date="2000" name="FEBS Lett.">
        <title>Solution structure of alpha-conotoxin SI.</title>
        <authorList>
            <person name="Benie A.J."/>
            <person name="Whitford D."/>
            <person name="Hargittai B."/>
            <person name="Barany G."/>
            <person name="Janes R.W."/>
        </authorList>
    </citation>
    <scope>STRUCTURE BY NMR OF 50-62</scope>
    <scope>DISULFIDE BONDS</scope>
    <scope>AMIDATION AT CYS-62</scope>
</reference>
<evidence type="ECO:0000255" key="1"/>
<evidence type="ECO:0000256" key="2">
    <source>
        <dbReference type="SAM" id="MobiDB-lite"/>
    </source>
</evidence>
<evidence type="ECO:0000269" key="3">
    <source>
    </source>
</evidence>
<evidence type="ECO:0000269" key="4">
    <source>
    </source>
</evidence>
<evidence type="ECO:0000269" key="5">
    <source>
    </source>
</evidence>
<evidence type="ECO:0000269" key="6">
    <source>
    </source>
</evidence>
<evidence type="ECO:0000303" key="7">
    <source>
    </source>
</evidence>
<evidence type="ECO:0000303" key="8">
    <source>
    </source>
</evidence>
<evidence type="ECO:0000303" key="9">
    <source>
    </source>
</evidence>
<evidence type="ECO:0000303" key="10">
    <source>
    </source>
</evidence>
<evidence type="ECO:0000305" key="11"/>
<evidence type="ECO:0000305" key="12">
    <source>
    </source>
</evidence>
<evidence type="ECO:0007744" key="13">
    <source>
        <dbReference type="PDB" id="1HJE"/>
    </source>
</evidence>
<evidence type="ECO:0007744" key="14">
    <source>
        <dbReference type="PDB" id="1QMW"/>
    </source>
</evidence>
<evidence type="ECO:0007829" key="15">
    <source>
        <dbReference type="PDB" id="1HJE"/>
    </source>
</evidence>
<organism>
    <name type="scientific">Conus striatus</name>
    <name type="common">Striated cone</name>
    <dbReference type="NCBI Taxonomy" id="6493"/>
    <lineage>
        <taxon>Eukaryota</taxon>
        <taxon>Metazoa</taxon>
        <taxon>Spiralia</taxon>
        <taxon>Lophotrochozoa</taxon>
        <taxon>Mollusca</taxon>
        <taxon>Gastropoda</taxon>
        <taxon>Caenogastropoda</taxon>
        <taxon>Neogastropoda</taxon>
        <taxon>Conoidea</taxon>
        <taxon>Conidae</taxon>
        <taxon>Conus</taxon>
        <taxon>Pionoconus</taxon>
    </lineage>
</organism>
<keyword id="KW-0002">3D-structure</keyword>
<keyword id="KW-0008">Acetylcholine receptor inhibiting toxin</keyword>
<keyword id="KW-0027">Amidation</keyword>
<keyword id="KW-0903">Direct protein sequencing</keyword>
<keyword id="KW-1015">Disulfide bond</keyword>
<keyword id="KW-0872">Ion channel impairing toxin</keyword>
<keyword id="KW-0528">Neurotoxin</keyword>
<keyword id="KW-0629">Postsynaptic neurotoxin</keyword>
<keyword id="KW-0964">Secreted</keyword>
<keyword id="KW-0732">Signal</keyword>
<keyword id="KW-0800">Toxin</keyword>
<name>CA1_CONST</name>
<dbReference type="PIR" id="A28953">
    <property type="entry name" value="A28953"/>
</dbReference>
<dbReference type="PDB" id="1HJE">
    <property type="method" value="X-ray"/>
    <property type="resolution" value="0.75 A"/>
    <property type="chains" value="A=50-62"/>
</dbReference>
<dbReference type="PDB" id="1QMW">
    <property type="method" value="NMR"/>
    <property type="chains" value="A=50-62"/>
</dbReference>
<dbReference type="PDBsum" id="1HJE"/>
<dbReference type="PDBsum" id="1QMW"/>
<dbReference type="SMR" id="P15471"/>
<dbReference type="ConoServer" id="76">
    <property type="toxin name" value="SI precursor"/>
</dbReference>
<dbReference type="EvolutionaryTrace" id="P15471"/>
<dbReference type="GO" id="GO:0005576">
    <property type="term" value="C:extracellular region"/>
    <property type="evidence" value="ECO:0007669"/>
    <property type="project" value="UniProtKB-SubCell"/>
</dbReference>
<dbReference type="GO" id="GO:0035792">
    <property type="term" value="C:host cell postsynaptic membrane"/>
    <property type="evidence" value="ECO:0007669"/>
    <property type="project" value="UniProtKB-KW"/>
</dbReference>
<dbReference type="GO" id="GO:0030550">
    <property type="term" value="F:acetylcholine receptor inhibitor activity"/>
    <property type="evidence" value="ECO:0007669"/>
    <property type="project" value="UniProtKB-KW"/>
</dbReference>
<dbReference type="GO" id="GO:0099106">
    <property type="term" value="F:ion channel regulator activity"/>
    <property type="evidence" value="ECO:0007669"/>
    <property type="project" value="UniProtKB-KW"/>
</dbReference>
<dbReference type="GO" id="GO:0090729">
    <property type="term" value="F:toxin activity"/>
    <property type="evidence" value="ECO:0007669"/>
    <property type="project" value="UniProtKB-KW"/>
</dbReference>
<dbReference type="InterPro" id="IPR009958">
    <property type="entry name" value="Conotoxin_a-typ"/>
</dbReference>
<dbReference type="InterPro" id="IPR018072">
    <property type="entry name" value="Conotoxin_a-typ_CS"/>
</dbReference>
<dbReference type="Pfam" id="PF07365">
    <property type="entry name" value="Toxin_8"/>
    <property type="match status" value="1"/>
</dbReference>
<dbReference type="PROSITE" id="PS60014">
    <property type="entry name" value="ALPHA_CONOTOXIN"/>
    <property type="match status" value="1"/>
</dbReference>
<accession>P15471</accession>
<sequence>MGMRMMFTVFLLVVLATTVVSFPSDRASDGRDDEAKDERSDMHESDRKEICCNPACGPKYSCGR</sequence>
<feature type="signal peptide" evidence="1">
    <location>
        <begin position="1"/>
        <end position="21"/>
    </location>
</feature>
<feature type="propeptide" id="PRO_0000034887" evidence="12">
    <location>
        <begin position="22"/>
        <end position="49"/>
    </location>
</feature>
<feature type="peptide" id="PRO_0000034888" description="Alpha-conotoxin SI" evidence="3">
    <location>
        <begin position="50"/>
        <end position="62"/>
    </location>
</feature>
<feature type="region of interest" description="Disordered" evidence="2">
    <location>
        <begin position="23"/>
        <end position="47"/>
    </location>
</feature>
<feature type="compositionally biased region" description="Basic and acidic residues" evidence="2">
    <location>
        <begin position="26"/>
        <end position="47"/>
    </location>
</feature>
<feature type="modified residue" description="Cysteine amide" evidence="3">
    <location>
        <position position="62"/>
    </location>
</feature>
<feature type="disulfide bond" evidence="3 13 14">
    <location>
        <begin position="51"/>
        <end position="56"/>
    </location>
</feature>
<feature type="disulfide bond" evidence="3 13 14">
    <location>
        <begin position="52"/>
        <end position="62"/>
    </location>
</feature>
<feature type="helix" evidence="15">
    <location>
        <begin position="54"/>
        <end position="59"/>
    </location>
</feature>
<protein>
    <recommendedName>
        <fullName evidence="7 8 9 10">Alpha-conotoxin SI</fullName>
    </recommendedName>
</protein>
<comment type="function">
    <text evidence="4 5 6">Alpha-conotoxins act on postsynaptic membranes, they bind to the nicotinic acetylcholine receptors (nAChR) and thus inhibit them (PubMed:3196703). Is active on muscle nAChR (IC(50)=113 nM on adult subtype (alpha-1-beta-1-gamma-delta/CHRNA1-CHRNB1-CHRNG-CHRND) and IC(50)=142 nM on fetal subtype (alpha-1-beta-1-delta-epsilon/CHRNA1-CHRNB1-CHRND-CHRNE)) (PubMed:35357806, PubMed:9174364). On mice muscle receptors, its higher affinity site is the alpha/delta nAChR subunit interface (PubMed:9174364). On Torpedo receptors, it does not distinguish between alpha/delta and alpha/gamma acetylcholine-binding sites (PubMed:9174364). In vivo, causes paralysis followed by death when injected into goldfish (PubMed:3196703). In contrast, has no effect on mice, when similar doses are intraperitoneally or intracerebrally injected (PubMed:3196703).</text>
</comment>
<comment type="subcellular location">
    <subcellularLocation>
        <location evidence="4">Secreted</location>
    </subcellularLocation>
</comment>
<comment type="tissue specificity">
    <text evidence="12">Expressed by the venom duct.</text>
</comment>
<comment type="domain">
    <text>The cysteine framework is I (CC-C-C). Alpha3/5 pattern.</text>
</comment>
<comment type="miscellaneous">
    <text evidence="5">Negative results: shows no or weak inhibition on neuronal nAChR alpha-3-beta-2/CHRNA3-CHRNB2, alpha-3-beta-4/CHRNA3-CHRNB4, alpha-4-beta-2/CHRNA4-CHRNB2, alpha-4-beta-4/CHRNA4-CHRNB4, alpha-7/CHRNA7, alpha-9-alpha-10/CHRNA9-CHRNA10.</text>
</comment>
<comment type="similarity">
    <text evidence="11">Belongs to the conotoxin A superfamily.</text>
</comment>
<proteinExistence type="evidence at protein level"/>